<comment type="function">
    <text evidence="2">Component of the acetyl coenzyme A carboxylase (ACC) complex. Biotin carboxylase (BC) catalyzes the carboxylation of biotin on its carrier protein (BCCP) and then the CO(2) group is transferred by the transcarboxylase to acetyl-CoA to form malonyl-CoA.</text>
</comment>
<comment type="catalytic activity">
    <reaction evidence="2">
        <text>N(6)-carboxybiotinyl-L-lysyl-[protein] + acetyl-CoA = N(6)-biotinyl-L-lysyl-[protein] + malonyl-CoA</text>
        <dbReference type="Rhea" id="RHEA:54728"/>
        <dbReference type="Rhea" id="RHEA-COMP:10505"/>
        <dbReference type="Rhea" id="RHEA-COMP:10506"/>
        <dbReference type="ChEBI" id="CHEBI:57288"/>
        <dbReference type="ChEBI" id="CHEBI:57384"/>
        <dbReference type="ChEBI" id="CHEBI:83144"/>
        <dbReference type="ChEBI" id="CHEBI:83145"/>
        <dbReference type="EC" id="2.1.3.15"/>
    </reaction>
</comment>
<comment type="cofactor">
    <cofactor evidence="2">
        <name>Zn(2+)</name>
        <dbReference type="ChEBI" id="CHEBI:29105"/>
    </cofactor>
    <text evidence="2">Binds 1 zinc ion per subunit.</text>
</comment>
<comment type="pathway">
    <text evidence="2">Lipid metabolism; malonyl-CoA biosynthesis; malonyl-CoA from acetyl-CoA: step 1/1.</text>
</comment>
<comment type="subunit">
    <text evidence="1">Acetyl-CoA carboxylase is a heterohexamer composed of biotin carboxyl carrier protein, biotin carboxylase and 2 subunits each of ACCase subunit alpha and ACCase plastid-coded subunit beta (accD).</text>
</comment>
<comment type="subcellular location">
    <subcellularLocation>
        <location evidence="2">Plastid</location>
        <location evidence="2">Chloroplast stroma</location>
    </subcellularLocation>
</comment>
<comment type="similarity">
    <text evidence="2">Belongs to the AccD/PCCB family.</text>
</comment>
<gene>
    <name evidence="2" type="primary">accD</name>
</gene>
<geneLocation type="chloroplast"/>
<proteinExistence type="inferred from homology"/>
<accession>A4QJC4</accession>
<organism>
    <name type="scientific">Aethionema cordifolium</name>
    <name type="common">Lebanon stonecress</name>
    <dbReference type="NCBI Taxonomy" id="434059"/>
    <lineage>
        <taxon>Eukaryota</taxon>
        <taxon>Viridiplantae</taxon>
        <taxon>Streptophyta</taxon>
        <taxon>Embryophyta</taxon>
        <taxon>Tracheophyta</taxon>
        <taxon>Spermatophyta</taxon>
        <taxon>Magnoliopsida</taxon>
        <taxon>eudicotyledons</taxon>
        <taxon>Gunneridae</taxon>
        <taxon>Pentapetalae</taxon>
        <taxon>rosids</taxon>
        <taxon>malvids</taxon>
        <taxon>Brassicales</taxon>
        <taxon>Brassicaceae</taxon>
        <taxon>Aethionemeae</taxon>
        <taxon>Aethionema</taxon>
    </lineage>
</organism>
<sequence>MEKSWFNFLFSKGELEYRCELSKSMDSFAPIEKTTDRVIYDTDKNLYDWGERSSYYNNVDLLVSSKDIRNFISDDTFFVRDSNKNSYSIYFDIQNQKFEIDNGLSDLEVFFYSYRSSSYLNNRSKSDNDPHYDPSIKDTKYDCNNHINSCIDSYFRSHICIDSHFLSDSKNYNESYIYNLICSKSGKIRESQNYKIRTNMNRSDLIKDFDITQNYNQLWIQCDNCYALIYKKALKFKMNVCEQCGYYLKISSSDRIELSIDPGTWNPMDEDMVSTDPIQFHSREEPYQNRIDSAQKKTGLTDAVQTGTGQLNGIPVALGVMDFQFMGGSMGSVVGEKITRLIEYATTEFLPLILVCSSGGARMQEGSLSLMQMAKISSVLCDYQSSKKLFYISILTSPTTGGVTASFGMLGDIIIAEPYAYIAFAGKRVIEQTLKKAVPEGSQAAESLLRKGLLDAIVPRNPLKGVLTELFQLHAFFPLNKNEIK</sequence>
<name>ACCD_AETCO</name>
<protein>
    <recommendedName>
        <fullName evidence="2">Acetyl-coenzyme A carboxylase carboxyl transferase subunit beta, chloroplastic</fullName>
        <shortName evidence="2">ACCase subunit beta</shortName>
        <shortName evidence="2">Acetyl-CoA carboxylase carboxyltransferase subunit beta</shortName>
        <ecNumber evidence="2">2.1.3.15</ecNumber>
    </recommendedName>
</protein>
<dbReference type="EC" id="2.1.3.15" evidence="2"/>
<dbReference type="EMBL" id="AP009366">
    <property type="protein sequence ID" value="BAF49779.1"/>
    <property type="molecule type" value="Genomic_DNA"/>
</dbReference>
<dbReference type="RefSeq" id="YP_001122955.1">
    <property type="nucleotide sequence ID" value="NC_009265.1"/>
</dbReference>
<dbReference type="SMR" id="A4QJC4"/>
<dbReference type="GeneID" id="4968663"/>
<dbReference type="UniPathway" id="UPA00655">
    <property type="reaction ID" value="UER00711"/>
</dbReference>
<dbReference type="GO" id="GO:0009317">
    <property type="term" value="C:acetyl-CoA carboxylase complex"/>
    <property type="evidence" value="ECO:0007669"/>
    <property type="project" value="InterPro"/>
</dbReference>
<dbReference type="GO" id="GO:0009570">
    <property type="term" value="C:chloroplast stroma"/>
    <property type="evidence" value="ECO:0007669"/>
    <property type="project" value="UniProtKB-SubCell"/>
</dbReference>
<dbReference type="GO" id="GO:0003989">
    <property type="term" value="F:acetyl-CoA carboxylase activity"/>
    <property type="evidence" value="ECO:0007669"/>
    <property type="project" value="InterPro"/>
</dbReference>
<dbReference type="GO" id="GO:0005524">
    <property type="term" value="F:ATP binding"/>
    <property type="evidence" value="ECO:0007669"/>
    <property type="project" value="UniProtKB-KW"/>
</dbReference>
<dbReference type="GO" id="GO:0016743">
    <property type="term" value="F:carboxyl- or carbamoyltransferase activity"/>
    <property type="evidence" value="ECO:0007669"/>
    <property type="project" value="UniProtKB-UniRule"/>
</dbReference>
<dbReference type="GO" id="GO:0008270">
    <property type="term" value="F:zinc ion binding"/>
    <property type="evidence" value="ECO:0007669"/>
    <property type="project" value="UniProtKB-UniRule"/>
</dbReference>
<dbReference type="GO" id="GO:0006633">
    <property type="term" value="P:fatty acid biosynthetic process"/>
    <property type="evidence" value="ECO:0007669"/>
    <property type="project" value="UniProtKB-KW"/>
</dbReference>
<dbReference type="GO" id="GO:2001295">
    <property type="term" value="P:malonyl-CoA biosynthetic process"/>
    <property type="evidence" value="ECO:0007669"/>
    <property type="project" value="UniProtKB-UniRule"/>
</dbReference>
<dbReference type="Gene3D" id="3.90.226.10">
    <property type="entry name" value="2-enoyl-CoA Hydratase, Chain A, domain 1"/>
    <property type="match status" value="1"/>
</dbReference>
<dbReference type="HAMAP" id="MF_01395">
    <property type="entry name" value="AcetylCoA_CT_beta"/>
    <property type="match status" value="1"/>
</dbReference>
<dbReference type="InterPro" id="IPR034733">
    <property type="entry name" value="AcCoA_carboxyl_beta"/>
</dbReference>
<dbReference type="InterPro" id="IPR000438">
    <property type="entry name" value="Acetyl_CoA_COase_Trfase_b_su"/>
</dbReference>
<dbReference type="InterPro" id="IPR029045">
    <property type="entry name" value="ClpP/crotonase-like_dom_sf"/>
</dbReference>
<dbReference type="InterPro" id="IPR011762">
    <property type="entry name" value="COA_CT_N"/>
</dbReference>
<dbReference type="NCBIfam" id="TIGR00515">
    <property type="entry name" value="accD"/>
    <property type="match status" value="1"/>
</dbReference>
<dbReference type="PANTHER" id="PTHR42995">
    <property type="entry name" value="ACETYL-COENZYME A CARBOXYLASE CARBOXYL TRANSFERASE SUBUNIT BETA, CHLOROPLASTIC"/>
    <property type="match status" value="1"/>
</dbReference>
<dbReference type="PANTHER" id="PTHR42995:SF5">
    <property type="entry name" value="ACETYL-COENZYME A CARBOXYLASE CARBOXYL TRANSFERASE SUBUNIT BETA, CHLOROPLASTIC"/>
    <property type="match status" value="1"/>
</dbReference>
<dbReference type="Pfam" id="PF01039">
    <property type="entry name" value="Carboxyl_trans"/>
    <property type="match status" value="1"/>
</dbReference>
<dbReference type="PRINTS" id="PR01070">
    <property type="entry name" value="ACCCTRFRASEB"/>
</dbReference>
<dbReference type="SUPFAM" id="SSF52096">
    <property type="entry name" value="ClpP/crotonase"/>
    <property type="match status" value="1"/>
</dbReference>
<dbReference type="PROSITE" id="PS50980">
    <property type="entry name" value="COA_CT_NTER"/>
    <property type="match status" value="1"/>
</dbReference>
<keyword id="KW-0067">ATP-binding</keyword>
<keyword id="KW-0150">Chloroplast</keyword>
<keyword id="KW-0275">Fatty acid biosynthesis</keyword>
<keyword id="KW-0276">Fatty acid metabolism</keyword>
<keyword id="KW-0444">Lipid biosynthesis</keyword>
<keyword id="KW-0443">Lipid metabolism</keyword>
<keyword id="KW-0479">Metal-binding</keyword>
<keyword id="KW-0547">Nucleotide-binding</keyword>
<keyword id="KW-0934">Plastid</keyword>
<keyword id="KW-0808">Transferase</keyword>
<keyword id="KW-0862">Zinc</keyword>
<keyword id="KW-0863">Zinc-finger</keyword>
<feature type="chain" id="PRO_0000359118" description="Acetyl-coenzyme A carboxylase carboxyl transferase subunit beta, chloroplastic">
    <location>
        <begin position="1"/>
        <end position="485"/>
    </location>
</feature>
<feature type="domain" description="CoA carboxyltransferase N-terminal" evidence="3">
    <location>
        <begin position="218"/>
        <end position="485"/>
    </location>
</feature>
<feature type="zinc finger region" description="C4-type" evidence="2">
    <location>
        <begin position="222"/>
        <end position="244"/>
    </location>
</feature>
<feature type="binding site" evidence="2">
    <location>
        <position position="222"/>
    </location>
    <ligand>
        <name>Zn(2+)</name>
        <dbReference type="ChEBI" id="CHEBI:29105"/>
    </ligand>
</feature>
<feature type="binding site" evidence="2">
    <location>
        <position position="225"/>
    </location>
    <ligand>
        <name>Zn(2+)</name>
        <dbReference type="ChEBI" id="CHEBI:29105"/>
    </ligand>
</feature>
<feature type="binding site" evidence="2">
    <location>
        <position position="241"/>
    </location>
    <ligand>
        <name>Zn(2+)</name>
        <dbReference type="ChEBI" id="CHEBI:29105"/>
    </ligand>
</feature>
<feature type="binding site" evidence="2">
    <location>
        <position position="244"/>
    </location>
    <ligand>
        <name>Zn(2+)</name>
        <dbReference type="ChEBI" id="CHEBI:29105"/>
    </ligand>
</feature>
<evidence type="ECO:0000250" key="1"/>
<evidence type="ECO:0000255" key="2">
    <source>
        <dbReference type="HAMAP-Rule" id="MF_01395"/>
    </source>
</evidence>
<evidence type="ECO:0000255" key="3">
    <source>
        <dbReference type="PROSITE-ProRule" id="PRU01136"/>
    </source>
</evidence>
<reference key="1">
    <citation type="submission" date="2007-03" db="EMBL/GenBank/DDBJ databases">
        <title>Sequencing analysis of Aethionema coridifolium chloroplast DNA.</title>
        <authorList>
            <person name="Hosouchi T."/>
            <person name="Tsuruoka H."/>
            <person name="Kotani H."/>
        </authorList>
    </citation>
    <scope>NUCLEOTIDE SEQUENCE [LARGE SCALE GENOMIC DNA]</scope>
</reference>